<evidence type="ECO:0000255" key="1">
    <source>
        <dbReference type="HAMAP-Rule" id="MF_00437"/>
    </source>
</evidence>
<gene>
    <name evidence="1" type="primary">ycf4</name>
    <name type="ordered locus">MoinCp032</name>
</gene>
<reference key="1">
    <citation type="submission" date="2005-09" db="EMBL/GenBank/DDBJ databases">
        <title>The chloroplast genome of mulberry: structural features and comparative analysis.</title>
        <authorList>
            <person name="Ravi V."/>
            <person name="Khurana J.P."/>
            <person name="Tyagi A.K."/>
            <person name="Khurana P."/>
        </authorList>
    </citation>
    <scope>NUCLEOTIDE SEQUENCE [LARGE SCALE GENOMIC DNA]</scope>
    <source>
        <strain>cv. K2</strain>
    </source>
</reference>
<geneLocation type="chloroplast"/>
<keyword id="KW-0150">Chloroplast</keyword>
<keyword id="KW-0472">Membrane</keyword>
<keyword id="KW-0602">Photosynthesis</keyword>
<keyword id="KW-0934">Plastid</keyword>
<keyword id="KW-0793">Thylakoid</keyword>
<keyword id="KW-0812">Transmembrane</keyword>
<keyword id="KW-1133">Transmembrane helix</keyword>
<feature type="chain" id="PRO_0000275661" description="Photosystem I assembly protein Ycf4">
    <location>
        <begin position="1"/>
        <end position="184"/>
    </location>
</feature>
<feature type="transmembrane region" description="Helical" evidence="1">
    <location>
        <begin position="22"/>
        <end position="42"/>
    </location>
</feature>
<feature type="transmembrane region" description="Helical" evidence="1">
    <location>
        <begin position="57"/>
        <end position="77"/>
    </location>
</feature>
<accession>Q09X06</accession>
<sequence length="184" mass="21306">MSWRSDHICIELIAGSRKPSNVCWAFILFLGSLGFLLVGTSSYLGRNFIPFFPSQQIIFFPQGIVMSFYGIAGLFISSYLWCTISWNVGSGYDRFDIKEGIVCIFRWGFPGKNRRIFLRFLMKDIQSIRIEVKEGIYARRVLYMEIRGQGSIPLTRTDENLTLREIEQKAAELAYFLRVPIEVF</sequence>
<protein>
    <recommendedName>
        <fullName evidence="1">Photosystem I assembly protein Ycf4</fullName>
    </recommendedName>
</protein>
<name>YCF4_MORIN</name>
<proteinExistence type="inferred from homology"/>
<comment type="function">
    <text evidence="1">Seems to be required for the assembly of the photosystem I complex.</text>
</comment>
<comment type="subcellular location">
    <subcellularLocation>
        <location evidence="1">Plastid</location>
        <location evidence="1">Chloroplast thylakoid membrane</location>
        <topology evidence="1">Multi-pass membrane protein</topology>
    </subcellularLocation>
</comment>
<comment type="similarity">
    <text evidence="1">Belongs to the Ycf4 family.</text>
</comment>
<organism>
    <name type="scientific">Morus indica</name>
    <name type="common">Mulberry</name>
    <dbReference type="NCBI Taxonomy" id="248361"/>
    <lineage>
        <taxon>Eukaryota</taxon>
        <taxon>Viridiplantae</taxon>
        <taxon>Streptophyta</taxon>
        <taxon>Embryophyta</taxon>
        <taxon>Tracheophyta</taxon>
        <taxon>Spermatophyta</taxon>
        <taxon>Magnoliopsida</taxon>
        <taxon>eudicotyledons</taxon>
        <taxon>Gunneridae</taxon>
        <taxon>Pentapetalae</taxon>
        <taxon>rosids</taxon>
        <taxon>fabids</taxon>
        <taxon>Rosales</taxon>
        <taxon>Moraceae</taxon>
        <taxon>Moreae</taxon>
        <taxon>Morus</taxon>
    </lineage>
</organism>
<dbReference type="EMBL" id="DQ226511">
    <property type="protein sequence ID" value="ABD77443.1"/>
    <property type="molecule type" value="Genomic_DNA"/>
</dbReference>
<dbReference type="RefSeq" id="YP_762272.1">
    <property type="nucleotide sequence ID" value="NC_008359.1"/>
</dbReference>
<dbReference type="GeneID" id="4290580"/>
<dbReference type="GO" id="GO:0009535">
    <property type="term" value="C:chloroplast thylakoid membrane"/>
    <property type="evidence" value="ECO:0007669"/>
    <property type="project" value="UniProtKB-SubCell"/>
</dbReference>
<dbReference type="GO" id="GO:0009522">
    <property type="term" value="C:photosystem I"/>
    <property type="evidence" value="ECO:0007669"/>
    <property type="project" value="InterPro"/>
</dbReference>
<dbReference type="GO" id="GO:0015979">
    <property type="term" value="P:photosynthesis"/>
    <property type="evidence" value="ECO:0007669"/>
    <property type="project" value="UniProtKB-UniRule"/>
</dbReference>
<dbReference type="HAMAP" id="MF_00437">
    <property type="entry name" value="Ycf4"/>
    <property type="match status" value="1"/>
</dbReference>
<dbReference type="InterPro" id="IPR003359">
    <property type="entry name" value="PSI_Ycf4_assembly"/>
</dbReference>
<dbReference type="PANTHER" id="PTHR33288">
    <property type="match status" value="1"/>
</dbReference>
<dbReference type="PANTHER" id="PTHR33288:SF4">
    <property type="entry name" value="PHOTOSYSTEM I ASSEMBLY PROTEIN YCF4"/>
    <property type="match status" value="1"/>
</dbReference>
<dbReference type="Pfam" id="PF02392">
    <property type="entry name" value="Ycf4"/>
    <property type="match status" value="1"/>
</dbReference>